<feature type="chain" id="PRO_1000010353" description="Imidazoleglycerol-phosphate dehydratase">
    <location>
        <begin position="1"/>
        <end position="195"/>
    </location>
</feature>
<protein>
    <recommendedName>
        <fullName evidence="1">Imidazoleglycerol-phosphate dehydratase</fullName>
        <shortName evidence="1">IGPD</shortName>
        <ecNumber evidence="1">4.2.1.19</ecNumber>
    </recommendedName>
</protein>
<accession>Q1GNC0</accession>
<organism>
    <name type="scientific">Sphingopyxis alaskensis (strain DSM 13593 / LMG 18877 / RB2256)</name>
    <name type="common">Sphingomonas alaskensis</name>
    <dbReference type="NCBI Taxonomy" id="317655"/>
    <lineage>
        <taxon>Bacteria</taxon>
        <taxon>Pseudomonadati</taxon>
        <taxon>Pseudomonadota</taxon>
        <taxon>Alphaproteobacteria</taxon>
        <taxon>Sphingomonadales</taxon>
        <taxon>Sphingomonadaceae</taxon>
        <taxon>Sphingopyxis</taxon>
    </lineage>
</organism>
<dbReference type="EC" id="4.2.1.19" evidence="1"/>
<dbReference type="EMBL" id="CP000356">
    <property type="protein sequence ID" value="ABF54852.1"/>
    <property type="molecule type" value="Genomic_DNA"/>
</dbReference>
<dbReference type="RefSeq" id="WP_011543414.1">
    <property type="nucleotide sequence ID" value="NC_008048.1"/>
</dbReference>
<dbReference type="SMR" id="Q1GNC0"/>
<dbReference type="STRING" id="317655.Sala_3149"/>
<dbReference type="KEGG" id="sal:Sala_3149"/>
<dbReference type="eggNOG" id="COG0131">
    <property type="taxonomic scope" value="Bacteria"/>
</dbReference>
<dbReference type="HOGENOM" id="CLU_044308_2_0_5"/>
<dbReference type="OrthoDB" id="9813612at2"/>
<dbReference type="UniPathway" id="UPA00031">
    <property type="reaction ID" value="UER00011"/>
</dbReference>
<dbReference type="Proteomes" id="UP000006578">
    <property type="component" value="Chromosome"/>
</dbReference>
<dbReference type="GO" id="GO:0005737">
    <property type="term" value="C:cytoplasm"/>
    <property type="evidence" value="ECO:0007669"/>
    <property type="project" value="UniProtKB-SubCell"/>
</dbReference>
<dbReference type="GO" id="GO:0004424">
    <property type="term" value="F:imidazoleglycerol-phosphate dehydratase activity"/>
    <property type="evidence" value="ECO:0007669"/>
    <property type="project" value="UniProtKB-UniRule"/>
</dbReference>
<dbReference type="GO" id="GO:0000105">
    <property type="term" value="P:L-histidine biosynthetic process"/>
    <property type="evidence" value="ECO:0007669"/>
    <property type="project" value="UniProtKB-UniRule"/>
</dbReference>
<dbReference type="CDD" id="cd07914">
    <property type="entry name" value="IGPD"/>
    <property type="match status" value="1"/>
</dbReference>
<dbReference type="FunFam" id="3.30.230.40:FF:000001">
    <property type="entry name" value="Imidazoleglycerol-phosphate dehydratase HisB"/>
    <property type="match status" value="1"/>
</dbReference>
<dbReference type="FunFam" id="3.30.230.40:FF:000003">
    <property type="entry name" value="Imidazoleglycerol-phosphate dehydratase HisB"/>
    <property type="match status" value="1"/>
</dbReference>
<dbReference type="Gene3D" id="3.30.230.40">
    <property type="entry name" value="Imidazole glycerol phosphate dehydratase, domain 1"/>
    <property type="match status" value="2"/>
</dbReference>
<dbReference type="HAMAP" id="MF_00076">
    <property type="entry name" value="HisB"/>
    <property type="match status" value="1"/>
</dbReference>
<dbReference type="InterPro" id="IPR038494">
    <property type="entry name" value="IGPD_sf"/>
</dbReference>
<dbReference type="InterPro" id="IPR000807">
    <property type="entry name" value="ImidazoleglycerolP_deHydtase"/>
</dbReference>
<dbReference type="InterPro" id="IPR020565">
    <property type="entry name" value="ImidazoleglycerP_deHydtase_CS"/>
</dbReference>
<dbReference type="InterPro" id="IPR020568">
    <property type="entry name" value="Ribosomal_Su5_D2-typ_SF"/>
</dbReference>
<dbReference type="NCBIfam" id="NF002109">
    <property type="entry name" value="PRK00951.1-5"/>
    <property type="match status" value="1"/>
</dbReference>
<dbReference type="NCBIfam" id="NF002111">
    <property type="entry name" value="PRK00951.2-1"/>
    <property type="match status" value="1"/>
</dbReference>
<dbReference type="NCBIfam" id="NF002114">
    <property type="entry name" value="PRK00951.2-4"/>
    <property type="match status" value="1"/>
</dbReference>
<dbReference type="PANTHER" id="PTHR23133:SF2">
    <property type="entry name" value="IMIDAZOLEGLYCEROL-PHOSPHATE DEHYDRATASE"/>
    <property type="match status" value="1"/>
</dbReference>
<dbReference type="PANTHER" id="PTHR23133">
    <property type="entry name" value="IMIDAZOLEGLYCEROL-PHOSPHATE DEHYDRATASE HIS7"/>
    <property type="match status" value="1"/>
</dbReference>
<dbReference type="Pfam" id="PF00475">
    <property type="entry name" value="IGPD"/>
    <property type="match status" value="1"/>
</dbReference>
<dbReference type="SUPFAM" id="SSF54211">
    <property type="entry name" value="Ribosomal protein S5 domain 2-like"/>
    <property type="match status" value="2"/>
</dbReference>
<dbReference type="PROSITE" id="PS00954">
    <property type="entry name" value="IGP_DEHYDRATASE_1"/>
    <property type="match status" value="1"/>
</dbReference>
<dbReference type="PROSITE" id="PS00955">
    <property type="entry name" value="IGP_DEHYDRATASE_2"/>
    <property type="match status" value="1"/>
</dbReference>
<comment type="catalytic activity">
    <reaction evidence="1">
        <text>D-erythro-1-(imidazol-4-yl)glycerol 3-phosphate = 3-(imidazol-4-yl)-2-oxopropyl phosphate + H2O</text>
        <dbReference type="Rhea" id="RHEA:11040"/>
        <dbReference type="ChEBI" id="CHEBI:15377"/>
        <dbReference type="ChEBI" id="CHEBI:57766"/>
        <dbReference type="ChEBI" id="CHEBI:58278"/>
        <dbReference type="EC" id="4.2.1.19"/>
    </reaction>
</comment>
<comment type="pathway">
    <text evidence="1">Amino-acid biosynthesis; L-histidine biosynthesis; L-histidine from 5-phospho-alpha-D-ribose 1-diphosphate: step 6/9.</text>
</comment>
<comment type="subcellular location">
    <subcellularLocation>
        <location evidence="1">Cytoplasm</location>
    </subcellularLocation>
</comment>
<comment type="similarity">
    <text evidence="1">Belongs to the imidazoleglycerol-phosphate dehydratase family.</text>
</comment>
<gene>
    <name evidence="1" type="primary">hisB</name>
    <name type="ordered locus">Sala_3149</name>
</gene>
<evidence type="ECO:0000255" key="1">
    <source>
        <dbReference type="HAMAP-Rule" id="MF_00076"/>
    </source>
</evidence>
<name>HIS7_SPHAL</name>
<sequence length="195" mass="21509">MRTATVQRTTKETDIAITVNLDGTGDYSVSTGIGFLDHMVEQLSRHSLIDISMQVKGDLHIDQHHTVEDSALALGEAVAKALGDKRGIARYGEAHAPMDETLTRCVLDISGRPHCVYKSSFSQPRLGEMDTEMFPHWFHSFAQTAGITLHIETLYGENNHHIAESMYKALARALRQAVEIDPRKGDAIPSTKGVL</sequence>
<reference key="1">
    <citation type="journal article" date="2009" name="Proc. Natl. Acad. Sci. U.S.A.">
        <title>The genomic basis of trophic strategy in marine bacteria.</title>
        <authorList>
            <person name="Lauro F.M."/>
            <person name="McDougald D."/>
            <person name="Thomas T."/>
            <person name="Williams T.J."/>
            <person name="Egan S."/>
            <person name="Rice S."/>
            <person name="DeMaere M.Z."/>
            <person name="Ting L."/>
            <person name="Ertan H."/>
            <person name="Johnson J."/>
            <person name="Ferriera S."/>
            <person name="Lapidus A."/>
            <person name="Anderson I."/>
            <person name="Kyrpides N."/>
            <person name="Munk A.C."/>
            <person name="Detter C."/>
            <person name="Han C.S."/>
            <person name="Brown M.V."/>
            <person name="Robb F.T."/>
            <person name="Kjelleberg S."/>
            <person name="Cavicchioli R."/>
        </authorList>
    </citation>
    <scope>NUCLEOTIDE SEQUENCE [LARGE SCALE GENOMIC DNA]</scope>
    <source>
        <strain>DSM 13593 / LMG 18877 / RB2256</strain>
    </source>
</reference>
<keyword id="KW-0028">Amino-acid biosynthesis</keyword>
<keyword id="KW-0963">Cytoplasm</keyword>
<keyword id="KW-0368">Histidine biosynthesis</keyword>
<keyword id="KW-0456">Lyase</keyword>
<keyword id="KW-1185">Reference proteome</keyword>
<proteinExistence type="inferred from homology"/>